<name>AROA_STRA5</name>
<comment type="function">
    <text evidence="1">Catalyzes the transfer of the enolpyruvyl moiety of phosphoenolpyruvate (PEP) to the 5-hydroxyl of shikimate-3-phosphate (S3P) to produce enolpyruvyl shikimate-3-phosphate and inorganic phosphate.</text>
</comment>
<comment type="catalytic activity">
    <reaction evidence="1">
        <text>3-phosphoshikimate + phosphoenolpyruvate = 5-O-(1-carboxyvinyl)-3-phosphoshikimate + phosphate</text>
        <dbReference type="Rhea" id="RHEA:21256"/>
        <dbReference type="ChEBI" id="CHEBI:43474"/>
        <dbReference type="ChEBI" id="CHEBI:57701"/>
        <dbReference type="ChEBI" id="CHEBI:58702"/>
        <dbReference type="ChEBI" id="CHEBI:145989"/>
        <dbReference type="EC" id="2.5.1.19"/>
    </reaction>
    <physiologicalReaction direction="left-to-right" evidence="1">
        <dbReference type="Rhea" id="RHEA:21257"/>
    </physiologicalReaction>
</comment>
<comment type="pathway">
    <text evidence="1">Metabolic intermediate biosynthesis; chorismate biosynthesis; chorismate from D-erythrose 4-phosphate and phosphoenolpyruvate: step 6/7.</text>
</comment>
<comment type="subunit">
    <text evidence="1">Monomer.</text>
</comment>
<comment type="subcellular location">
    <subcellularLocation>
        <location evidence="1">Cytoplasm</location>
    </subcellularLocation>
</comment>
<comment type="similarity">
    <text evidence="1">Belongs to the EPSP synthase family.</text>
</comment>
<accession>Q8E0U0</accession>
<sequence>MKLLTNANTLKGTIRVPGDKSISHRAIIFGSISQGVTRIVDVLRGEDVLSTIEAFKQMGVLIEDDGEIITIYGKGFAGLTQPNNLLDMGNSGTSMRLIAGVLAGQEFEVTMVGDNSLSKRPMDRIALPLSKMGARISGVTNRDLPPLKLQGTKKLKPIFYHLPVASAQVKSALIFAALQTKGESLIVEKEQTRNHTEDMIRQFGGHLDIKDKEIRLNGGQSLVGQDIRVPGDISSAAFWIVAGLIIPNSHIILENVGINETRTGILDVVSKMGGKIKLSSVDNQVKSATLTVDYSHLQATHISGAMIPRLIDELPIIALLATQAQGTTVIADAQELKVKETDRIQVVVESLKQMGADITATADGMIIRGNTPLHAASLDCHGDHRIGMMIAIAALLVKEGEVDLSGEEAINTSYPNFLEHLEGLVNA</sequence>
<keyword id="KW-0028">Amino-acid biosynthesis</keyword>
<keyword id="KW-0057">Aromatic amino acid biosynthesis</keyword>
<keyword id="KW-0963">Cytoplasm</keyword>
<keyword id="KW-1185">Reference proteome</keyword>
<keyword id="KW-0808">Transferase</keyword>
<dbReference type="EC" id="2.5.1.19" evidence="1"/>
<dbReference type="EMBL" id="AE009948">
    <property type="protein sequence ID" value="AAM99526.1"/>
    <property type="molecule type" value="Genomic_DNA"/>
</dbReference>
<dbReference type="RefSeq" id="NP_687654.1">
    <property type="nucleotide sequence ID" value="NC_004116.1"/>
</dbReference>
<dbReference type="RefSeq" id="WP_000772014.1">
    <property type="nucleotide sequence ID" value="NC_004116.1"/>
</dbReference>
<dbReference type="SMR" id="Q8E0U0"/>
<dbReference type="STRING" id="208435.SAG0630"/>
<dbReference type="GeneID" id="66885543"/>
<dbReference type="KEGG" id="sag:SAG0630"/>
<dbReference type="PATRIC" id="fig|208435.3.peg.630"/>
<dbReference type="HOGENOM" id="CLU_024321_0_1_9"/>
<dbReference type="OrthoDB" id="9809920at2"/>
<dbReference type="UniPathway" id="UPA00053">
    <property type="reaction ID" value="UER00089"/>
</dbReference>
<dbReference type="PHI-base" id="PHI:11573"/>
<dbReference type="Proteomes" id="UP000000821">
    <property type="component" value="Chromosome"/>
</dbReference>
<dbReference type="GO" id="GO:0005737">
    <property type="term" value="C:cytoplasm"/>
    <property type="evidence" value="ECO:0007669"/>
    <property type="project" value="UniProtKB-SubCell"/>
</dbReference>
<dbReference type="GO" id="GO:0003866">
    <property type="term" value="F:3-phosphoshikimate 1-carboxyvinyltransferase activity"/>
    <property type="evidence" value="ECO:0007669"/>
    <property type="project" value="UniProtKB-UniRule"/>
</dbReference>
<dbReference type="GO" id="GO:0008652">
    <property type="term" value="P:amino acid biosynthetic process"/>
    <property type="evidence" value="ECO:0007669"/>
    <property type="project" value="UniProtKB-KW"/>
</dbReference>
<dbReference type="GO" id="GO:0009073">
    <property type="term" value="P:aromatic amino acid family biosynthetic process"/>
    <property type="evidence" value="ECO:0007669"/>
    <property type="project" value="UniProtKB-KW"/>
</dbReference>
<dbReference type="GO" id="GO:0009423">
    <property type="term" value="P:chorismate biosynthetic process"/>
    <property type="evidence" value="ECO:0007669"/>
    <property type="project" value="UniProtKB-UniRule"/>
</dbReference>
<dbReference type="CDD" id="cd01556">
    <property type="entry name" value="EPSP_synthase"/>
    <property type="match status" value="1"/>
</dbReference>
<dbReference type="FunFam" id="3.65.10.10:FF:000005">
    <property type="entry name" value="3-phosphoshikimate 1-carboxyvinyltransferase"/>
    <property type="match status" value="1"/>
</dbReference>
<dbReference type="Gene3D" id="3.65.10.10">
    <property type="entry name" value="Enolpyruvate transferase domain"/>
    <property type="match status" value="2"/>
</dbReference>
<dbReference type="HAMAP" id="MF_00210">
    <property type="entry name" value="EPSP_synth"/>
    <property type="match status" value="1"/>
</dbReference>
<dbReference type="InterPro" id="IPR001986">
    <property type="entry name" value="Enolpyruvate_Tfrase_dom"/>
</dbReference>
<dbReference type="InterPro" id="IPR036968">
    <property type="entry name" value="Enolpyruvate_Tfrase_sf"/>
</dbReference>
<dbReference type="InterPro" id="IPR006264">
    <property type="entry name" value="EPSP_synthase"/>
</dbReference>
<dbReference type="InterPro" id="IPR023193">
    <property type="entry name" value="EPSP_synthase_CS"/>
</dbReference>
<dbReference type="InterPro" id="IPR013792">
    <property type="entry name" value="RNA3'P_cycl/enolpyr_Trfase_a/b"/>
</dbReference>
<dbReference type="NCBIfam" id="TIGR01356">
    <property type="entry name" value="aroA"/>
    <property type="match status" value="1"/>
</dbReference>
<dbReference type="PANTHER" id="PTHR21090">
    <property type="entry name" value="AROM/DEHYDROQUINATE SYNTHASE"/>
    <property type="match status" value="1"/>
</dbReference>
<dbReference type="PANTHER" id="PTHR21090:SF5">
    <property type="entry name" value="PENTAFUNCTIONAL AROM POLYPEPTIDE"/>
    <property type="match status" value="1"/>
</dbReference>
<dbReference type="Pfam" id="PF00275">
    <property type="entry name" value="EPSP_synthase"/>
    <property type="match status" value="1"/>
</dbReference>
<dbReference type="PIRSF" id="PIRSF000505">
    <property type="entry name" value="EPSPS"/>
    <property type="match status" value="1"/>
</dbReference>
<dbReference type="SUPFAM" id="SSF55205">
    <property type="entry name" value="EPT/RTPC-like"/>
    <property type="match status" value="1"/>
</dbReference>
<dbReference type="PROSITE" id="PS00104">
    <property type="entry name" value="EPSP_SYNTHASE_1"/>
    <property type="match status" value="1"/>
</dbReference>
<dbReference type="PROSITE" id="PS00885">
    <property type="entry name" value="EPSP_SYNTHASE_2"/>
    <property type="match status" value="1"/>
</dbReference>
<feature type="chain" id="PRO_0000088300" description="3-phosphoshikimate 1-carboxyvinyltransferase">
    <location>
        <begin position="1"/>
        <end position="427"/>
    </location>
</feature>
<feature type="active site" description="Proton acceptor" evidence="1">
    <location>
        <position position="312"/>
    </location>
</feature>
<feature type="binding site" evidence="1">
    <location>
        <position position="20"/>
    </location>
    <ligand>
        <name>3-phosphoshikimate</name>
        <dbReference type="ChEBI" id="CHEBI:145989"/>
    </ligand>
</feature>
<feature type="binding site" evidence="1">
    <location>
        <position position="20"/>
    </location>
    <ligand>
        <name>phosphoenolpyruvate</name>
        <dbReference type="ChEBI" id="CHEBI:58702"/>
    </ligand>
</feature>
<feature type="binding site" evidence="1">
    <location>
        <position position="21"/>
    </location>
    <ligand>
        <name>3-phosphoshikimate</name>
        <dbReference type="ChEBI" id="CHEBI:145989"/>
    </ligand>
</feature>
<feature type="binding site" evidence="1">
    <location>
        <position position="25"/>
    </location>
    <ligand>
        <name>3-phosphoshikimate</name>
        <dbReference type="ChEBI" id="CHEBI:145989"/>
    </ligand>
</feature>
<feature type="binding site" evidence="1">
    <location>
        <position position="92"/>
    </location>
    <ligand>
        <name>phosphoenolpyruvate</name>
        <dbReference type="ChEBI" id="CHEBI:58702"/>
    </ligand>
</feature>
<feature type="binding site" evidence="1">
    <location>
        <position position="120"/>
    </location>
    <ligand>
        <name>phosphoenolpyruvate</name>
        <dbReference type="ChEBI" id="CHEBI:58702"/>
    </ligand>
</feature>
<feature type="binding site" evidence="1">
    <location>
        <position position="166"/>
    </location>
    <ligand>
        <name>3-phosphoshikimate</name>
        <dbReference type="ChEBI" id="CHEBI:145989"/>
    </ligand>
</feature>
<feature type="binding site" evidence="1">
    <location>
        <position position="168"/>
    </location>
    <ligand>
        <name>3-phosphoshikimate</name>
        <dbReference type="ChEBI" id="CHEBI:145989"/>
    </ligand>
</feature>
<feature type="binding site" evidence="1">
    <location>
        <position position="168"/>
    </location>
    <ligand>
        <name>phosphoenolpyruvate</name>
        <dbReference type="ChEBI" id="CHEBI:58702"/>
    </ligand>
</feature>
<feature type="binding site" evidence="1">
    <location>
        <position position="312"/>
    </location>
    <ligand>
        <name>3-phosphoshikimate</name>
        <dbReference type="ChEBI" id="CHEBI:145989"/>
    </ligand>
</feature>
<feature type="binding site" evidence="1">
    <location>
        <position position="339"/>
    </location>
    <ligand>
        <name>3-phosphoshikimate</name>
        <dbReference type="ChEBI" id="CHEBI:145989"/>
    </ligand>
</feature>
<feature type="binding site" evidence="1">
    <location>
        <position position="343"/>
    </location>
    <ligand>
        <name>phosphoenolpyruvate</name>
        <dbReference type="ChEBI" id="CHEBI:58702"/>
    </ligand>
</feature>
<feature type="binding site" evidence="1">
    <location>
        <position position="385"/>
    </location>
    <ligand>
        <name>phosphoenolpyruvate</name>
        <dbReference type="ChEBI" id="CHEBI:58702"/>
    </ligand>
</feature>
<evidence type="ECO:0000255" key="1">
    <source>
        <dbReference type="HAMAP-Rule" id="MF_00210"/>
    </source>
</evidence>
<proteinExistence type="inferred from homology"/>
<gene>
    <name evidence="1" type="primary">aroA</name>
    <name type="ordered locus">SAG0630</name>
</gene>
<organism>
    <name type="scientific">Streptococcus agalactiae serotype V (strain ATCC BAA-611 / 2603 V/R)</name>
    <dbReference type="NCBI Taxonomy" id="208435"/>
    <lineage>
        <taxon>Bacteria</taxon>
        <taxon>Bacillati</taxon>
        <taxon>Bacillota</taxon>
        <taxon>Bacilli</taxon>
        <taxon>Lactobacillales</taxon>
        <taxon>Streptococcaceae</taxon>
        <taxon>Streptococcus</taxon>
    </lineage>
</organism>
<reference key="1">
    <citation type="journal article" date="2002" name="Proc. Natl. Acad. Sci. U.S.A.">
        <title>Complete genome sequence and comparative genomic analysis of an emerging human pathogen, serotype V Streptococcus agalactiae.</title>
        <authorList>
            <person name="Tettelin H."/>
            <person name="Masignani V."/>
            <person name="Cieslewicz M.J."/>
            <person name="Eisen J.A."/>
            <person name="Peterson S.N."/>
            <person name="Wessels M.R."/>
            <person name="Paulsen I.T."/>
            <person name="Nelson K.E."/>
            <person name="Margarit I."/>
            <person name="Read T.D."/>
            <person name="Madoff L.C."/>
            <person name="Wolf A.M."/>
            <person name="Beanan M.J."/>
            <person name="Brinkac L.M."/>
            <person name="Daugherty S.C."/>
            <person name="DeBoy R.T."/>
            <person name="Durkin A.S."/>
            <person name="Kolonay J.F."/>
            <person name="Madupu R."/>
            <person name="Lewis M.R."/>
            <person name="Radune D."/>
            <person name="Fedorova N.B."/>
            <person name="Scanlan D."/>
            <person name="Khouri H.M."/>
            <person name="Mulligan S."/>
            <person name="Carty H.A."/>
            <person name="Cline R.T."/>
            <person name="Van Aken S.E."/>
            <person name="Gill J."/>
            <person name="Scarselli M."/>
            <person name="Mora M."/>
            <person name="Iacobini E.T."/>
            <person name="Brettoni C."/>
            <person name="Galli G."/>
            <person name="Mariani M."/>
            <person name="Vegni F."/>
            <person name="Maione D."/>
            <person name="Rinaudo D."/>
            <person name="Rappuoli R."/>
            <person name="Telford J.L."/>
            <person name="Kasper D.L."/>
            <person name="Grandi G."/>
            <person name="Fraser C.M."/>
        </authorList>
    </citation>
    <scope>NUCLEOTIDE SEQUENCE [LARGE SCALE GENOMIC DNA]</scope>
    <source>
        <strain>ATCC BAA-611 / 2603 V/R</strain>
    </source>
</reference>
<protein>
    <recommendedName>
        <fullName evidence="1">3-phosphoshikimate 1-carboxyvinyltransferase</fullName>
        <ecNumber evidence="1">2.5.1.19</ecNumber>
    </recommendedName>
    <alternativeName>
        <fullName evidence="1">5-enolpyruvylshikimate-3-phosphate synthase</fullName>
        <shortName evidence="1">EPSP synthase</shortName>
        <shortName evidence="1">EPSPS</shortName>
    </alternativeName>
</protein>